<sequence length="215" mass="23533">MSDNAQLTGLCDRFRGFYPVVIDVETAGFNAKTDALLEIAAITLKMDEQGWLMPDTTLHFHVEPFVGANLQPEALAFNGIDPNDPDRGAVSEYEALHEIFKVVRKGIKASGCNRAIMVAHNANFDHSFMMAAAERASLKRNPFHPFATFDTAALAGLALGQTVLSKACQTAGMDFDSTQAHSALYDTERTAVLFCEIVNRWKRLGGWPLPAAEEV</sequence>
<feature type="chain" id="PRO_0000208975" description="Ribonuclease T">
    <location>
        <begin position="1"/>
        <end position="215"/>
    </location>
</feature>
<feature type="domain" description="Exonuclease" evidence="1">
    <location>
        <begin position="20"/>
        <end position="194"/>
    </location>
</feature>
<feature type="active site" description="Proton donor/acceptor" evidence="1">
    <location>
        <position position="181"/>
    </location>
</feature>
<feature type="binding site" evidence="1">
    <location>
        <position position="23"/>
    </location>
    <ligand>
        <name>Mg(2+)</name>
        <dbReference type="ChEBI" id="CHEBI:18420"/>
        <label>1</label>
        <note>catalytic</note>
    </ligand>
</feature>
<feature type="binding site" evidence="1">
    <location>
        <position position="23"/>
    </location>
    <ligand>
        <name>Mg(2+)</name>
        <dbReference type="ChEBI" id="CHEBI:18420"/>
        <label>2</label>
        <note>catalytic</note>
    </ligand>
</feature>
<feature type="binding site" evidence="1">
    <location>
        <position position="25"/>
    </location>
    <ligand>
        <name>Mg(2+)</name>
        <dbReference type="ChEBI" id="CHEBI:18420"/>
        <label>2</label>
        <note>catalytic</note>
    </ligand>
</feature>
<feature type="binding site" evidence="1">
    <location>
        <position position="181"/>
    </location>
    <ligand>
        <name>Mg(2+)</name>
        <dbReference type="ChEBI" id="CHEBI:18420"/>
        <label>2</label>
        <note>catalytic</note>
    </ligand>
</feature>
<feature type="binding site" evidence="1">
    <location>
        <position position="186"/>
    </location>
    <ligand>
        <name>Mg(2+)</name>
        <dbReference type="ChEBI" id="CHEBI:18420"/>
        <label>2</label>
        <note>catalytic</note>
    </ligand>
</feature>
<feature type="site" description="Important for substrate binding and specificity" evidence="1">
    <location>
        <position position="29"/>
    </location>
</feature>
<feature type="site" description="Important for substrate binding and specificity" evidence="1">
    <location>
        <position position="77"/>
    </location>
</feature>
<feature type="site" description="Important for substrate binding and specificity" evidence="1">
    <location>
        <position position="124"/>
    </location>
</feature>
<feature type="site" description="Important for substrate binding and specificity" evidence="1">
    <location>
        <position position="146"/>
    </location>
</feature>
<proteinExistence type="inferred from homology"/>
<gene>
    <name evidence="1" type="primary">rnt</name>
    <name type="ordered locus">SF1679</name>
    <name type="ordered locus">S1811</name>
</gene>
<accession>P66683</accession>
<accession>Q8X627</accession>
<evidence type="ECO:0000255" key="1">
    <source>
        <dbReference type="HAMAP-Rule" id="MF_00157"/>
    </source>
</evidence>
<comment type="function">
    <text evidence="1">Trims short 3' overhangs of a variety of RNA species, leaving a one or two nucleotide 3' overhang. Responsible for the end-turnover of tRNA: specifically removes the terminal AMP residue from uncharged tRNA (tRNA-C-C-A). Also appears to be involved in tRNA biosynthesis.</text>
</comment>
<comment type="cofactor">
    <cofactor evidence="1">
        <name>Mg(2+)</name>
        <dbReference type="ChEBI" id="CHEBI:18420"/>
    </cofactor>
    <text evidence="1">Binds two Mg(2+) per subunit. The active form of the enzyme binds two Mg(2+) ions in its active site. The first Mg(2+) forms only one salt bridge with the protein.</text>
</comment>
<comment type="subunit">
    <text evidence="1">Homodimer.</text>
</comment>
<comment type="similarity">
    <text evidence="1">Belongs to the RNase T family.</text>
</comment>
<reference key="1">
    <citation type="journal article" date="2002" name="Nucleic Acids Res.">
        <title>Genome sequence of Shigella flexneri 2a: insights into pathogenicity through comparison with genomes of Escherichia coli K12 and O157.</title>
        <authorList>
            <person name="Jin Q."/>
            <person name="Yuan Z."/>
            <person name="Xu J."/>
            <person name="Wang Y."/>
            <person name="Shen Y."/>
            <person name="Lu W."/>
            <person name="Wang J."/>
            <person name="Liu H."/>
            <person name="Yang J."/>
            <person name="Yang F."/>
            <person name="Zhang X."/>
            <person name="Zhang J."/>
            <person name="Yang G."/>
            <person name="Wu H."/>
            <person name="Qu D."/>
            <person name="Dong J."/>
            <person name="Sun L."/>
            <person name="Xue Y."/>
            <person name="Zhao A."/>
            <person name="Gao Y."/>
            <person name="Zhu J."/>
            <person name="Kan B."/>
            <person name="Ding K."/>
            <person name="Chen S."/>
            <person name="Cheng H."/>
            <person name="Yao Z."/>
            <person name="He B."/>
            <person name="Chen R."/>
            <person name="Ma D."/>
            <person name="Qiang B."/>
            <person name="Wen Y."/>
            <person name="Hou Y."/>
            <person name="Yu J."/>
        </authorList>
    </citation>
    <scope>NUCLEOTIDE SEQUENCE [LARGE SCALE GENOMIC DNA]</scope>
    <source>
        <strain>301 / Serotype 2a</strain>
    </source>
</reference>
<reference key="2">
    <citation type="journal article" date="2003" name="Infect. Immun.">
        <title>Complete genome sequence and comparative genomics of Shigella flexneri serotype 2a strain 2457T.</title>
        <authorList>
            <person name="Wei J."/>
            <person name="Goldberg M.B."/>
            <person name="Burland V."/>
            <person name="Venkatesan M.M."/>
            <person name="Deng W."/>
            <person name="Fournier G."/>
            <person name="Mayhew G.F."/>
            <person name="Plunkett G. III"/>
            <person name="Rose D.J."/>
            <person name="Darling A."/>
            <person name="Mau B."/>
            <person name="Perna N.T."/>
            <person name="Payne S.M."/>
            <person name="Runyen-Janecky L.J."/>
            <person name="Zhou S."/>
            <person name="Schwartz D.C."/>
            <person name="Blattner F.R."/>
        </authorList>
    </citation>
    <scope>NUCLEOTIDE SEQUENCE [LARGE SCALE GENOMIC DNA]</scope>
    <source>
        <strain>ATCC 700930 / 2457T / Serotype 2a</strain>
    </source>
</reference>
<keyword id="KW-0269">Exonuclease</keyword>
<keyword id="KW-0378">Hydrolase</keyword>
<keyword id="KW-0460">Magnesium</keyword>
<keyword id="KW-0479">Metal-binding</keyword>
<keyword id="KW-0540">Nuclease</keyword>
<keyword id="KW-1185">Reference proteome</keyword>
<keyword id="KW-0819">tRNA processing</keyword>
<dbReference type="EC" id="3.1.13.-" evidence="1"/>
<dbReference type="EMBL" id="AE005674">
    <property type="protein sequence ID" value="AAN43260.1"/>
    <property type="molecule type" value="Genomic_DNA"/>
</dbReference>
<dbReference type="EMBL" id="AE014073">
    <property type="protein sequence ID" value="AAP17148.1"/>
    <property type="molecule type" value="Genomic_DNA"/>
</dbReference>
<dbReference type="RefSeq" id="NP_707553.1">
    <property type="nucleotide sequence ID" value="NC_004337.2"/>
</dbReference>
<dbReference type="RefSeq" id="WP_001282281.1">
    <property type="nucleotide sequence ID" value="NZ_WPGW01000025.1"/>
</dbReference>
<dbReference type="SMR" id="P66683"/>
<dbReference type="STRING" id="198214.SF1679"/>
<dbReference type="PaxDb" id="198214-SF1679"/>
<dbReference type="GeneID" id="1024880"/>
<dbReference type="GeneID" id="93775806"/>
<dbReference type="KEGG" id="sfl:SF1679"/>
<dbReference type="KEGG" id="sfx:S1811"/>
<dbReference type="PATRIC" id="fig|198214.7.peg.1978"/>
<dbReference type="HOGENOM" id="CLU_082724_0_0_6"/>
<dbReference type="Proteomes" id="UP000001006">
    <property type="component" value="Chromosome"/>
</dbReference>
<dbReference type="Proteomes" id="UP000002673">
    <property type="component" value="Chromosome"/>
</dbReference>
<dbReference type="GO" id="GO:0005829">
    <property type="term" value="C:cytosol"/>
    <property type="evidence" value="ECO:0007669"/>
    <property type="project" value="TreeGrafter"/>
</dbReference>
<dbReference type="GO" id="GO:0008408">
    <property type="term" value="F:3'-5' exonuclease activity"/>
    <property type="evidence" value="ECO:0007669"/>
    <property type="project" value="TreeGrafter"/>
</dbReference>
<dbReference type="GO" id="GO:0000287">
    <property type="term" value="F:magnesium ion binding"/>
    <property type="evidence" value="ECO:0007669"/>
    <property type="project" value="UniProtKB-UniRule"/>
</dbReference>
<dbReference type="GO" id="GO:0003676">
    <property type="term" value="F:nucleic acid binding"/>
    <property type="evidence" value="ECO:0007669"/>
    <property type="project" value="InterPro"/>
</dbReference>
<dbReference type="GO" id="GO:0016896">
    <property type="term" value="F:RNA exonuclease activity, producing 5'-phosphomonoesters"/>
    <property type="evidence" value="ECO:0007669"/>
    <property type="project" value="UniProtKB-UniRule"/>
</dbReference>
<dbReference type="GO" id="GO:0045004">
    <property type="term" value="P:DNA replication proofreading"/>
    <property type="evidence" value="ECO:0007669"/>
    <property type="project" value="TreeGrafter"/>
</dbReference>
<dbReference type="GO" id="GO:0008033">
    <property type="term" value="P:tRNA processing"/>
    <property type="evidence" value="ECO:0007669"/>
    <property type="project" value="UniProtKB-KW"/>
</dbReference>
<dbReference type="CDD" id="cd06134">
    <property type="entry name" value="RNaseT"/>
    <property type="match status" value="1"/>
</dbReference>
<dbReference type="FunFam" id="3.30.420.10:FF:000009">
    <property type="entry name" value="Ribonuclease T"/>
    <property type="match status" value="1"/>
</dbReference>
<dbReference type="Gene3D" id="3.30.420.10">
    <property type="entry name" value="Ribonuclease H-like superfamily/Ribonuclease H"/>
    <property type="match status" value="1"/>
</dbReference>
<dbReference type="HAMAP" id="MF_00157">
    <property type="entry name" value="RNase_T"/>
    <property type="match status" value="1"/>
</dbReference>
<dbReference type="InterPro" id="IPR013520">
    <property type="entry name" value="Exonuclease_RNaseT/DNA_pol3"/>
</dbReference>
<dbReference type="InterPro" id="IPR005987">
    <property type="entry name" value="RNase_T"/>
</dbReference>
<dbReference type="InterPro" id="IPR012337">
    <property type="entry name" value="RNaseH-like_sf"/>
</dbReference>
<dbReference type="InterPro" id="IPR036397">
    <property type="entry name" value="RNaseH_sf"/>
</dbReference>
<dbReference type="NCBIfam" id="TIGR01298">
    <property type="entry name" value="RNaseT"/>
    <property type="match status" value="1"/>
</dbReference>
<dbReference type="PANTHER" id="PTHR30231">
    <property type="entry name" value="DNA POLYMERASE III SUBUNIT EPSILON"/>
    <property type="match status" value="1"/>
</dbReference>
<dbReference type="PANTHER" id="PTHR30231:SF2">
    <property type="entry name" value="RIBONUCLEASE T"/>
    <property type="match status" value="1"/>
</dbReference>
<dbReference type="Pfam" id="PF00929">
    <property type="entry name" value="RNase_T"/>
    <property type="match status" value="1"/>
</dbReference>
<dbReference type="SMART" id="SM00479">
    <property type="entry name" value="EXOIII"/>
    <property type="match status" value="1"/>
</dbReference>
<dbReference type="SUPFAM" id="SSF53098">
    <property type="entry name" value="Ribonuclease H-like"/>
    <property type="match status" value="1"/>
</dbReference>
<name>RNT_SHIFL</name>
<organism>
    <name type="scientific">Shigella flexneri</name>
    <dbReference type="NCBI Taxonomy" id="623"/>
    <lineage>
        <taxon>Bacteria</taxon>
        <taxon>Pseudomonadati</taxon>
        <taxon>Pseudomonadota</taxon>
        <taxon>Gammaproteobacteria</taxon>
        <taxon>Enterobacterales</taxon>
        <taxon>Enterobacteriaceae</taxon>
        <taxon>Shigella</taxon>
    </lineage>
</organism>
<protein>
    <recommendedName>
        <fullName evidence="1">Ribonuclease T</fullName>
        <ecNumber evidence="1">3.1.13.-</ecNumber>
    </recommendedName>
    <alternativeName>
        <fullName evidence="1">Exoribonuclease T</fullName>
        <shortName evidence="1">RNase T</shortName>
    </alternativeName>
</protein>